<evidence type="ECO:0000250" key="1"/>
<evidence type="ECO:0000250" key="2">
    <source>
        <dbReference type="UniProtKB" id="P00338"/>
    </source>
</evidence>
<evidence type="ECO:0000269" key="3">
    <source>
    </source>
</evidence>
<evidence type="ECO:0000269" key="4">
    <source>
    </source>
</evidence>
<evidence type="ECO:0000305" key="5"/>
<evidence type="ECO:0007829" key="6">
    <source>
        <dbReference type="PDB" id="1LDM"/>
    </source>
</evidence>
<evidence type="ECO:0007829" key="7">
    <source>
        <dbReference type="PDB" id="3LDH"/>
    </source>
</evidence>
<evidence type="ECO:0007829" key="8">
    <source>
        <dbReference type="PDB" id="6LDH"/>
    </source>
</evidence>
<name>LDHA_SQUAC</name>
<feature type="initiator methionine" description="Removed" evidence="4">
    <location>
        <position position="1"/>
    </location>
</feature>
<feature type="chain" id="PRO_0000168455" description="L-lactate dehydrogenase A chain">
    <location>
        <begin position="2"/>
        <end position="333"/>
    </location>
</feature>
<feature type="active site" description="Proton acceptor">
    <location>
        <position position="194"/>
    </location>
</feature>
<feature type="binding site" evidence="3">
    <location>
        <begin position="30"/>
        <end position="58"/>
    </location>
    <ligand>
        <name>NAD(+)</name>
        <dbReference type="ChEBI" id="CHEBI:57540"/>
    </ligand>
</feature>
<feature type="binding site" evidence="3">
    <location>
        <position position="100"/>
    </location>
    <ligand>
        <name>NAD(+)</name>
        <dbReference type="ChEBI" id="CHEBI:57540"/>
    </ligand>
</feature>
<feature type="binding site" evidence="1">
    <location>
        <position position="107"/>
    </location>
    <ligand>
        <name>substrate</name>
    </ligand>
</feature>
<feature type="binding site" evidence="1">
    <location>
        <position position="139"/>
    </location>
    <ligand>
        <name>NAD(+)</name>
        <dbReference type="ChEBI" id="CHEBI:57540"/>
    </ligand>
</feature>
<feature type="binding site" evidence="1">
    <location>
        <position position="139"/>
    </location>
    <ligand>
        <name>substrate</name>
    </ligand>
</feature>
<feature type="binding site">
    <location>
        <position position="170"/>
    </location>
    <ligand>
        <name>substrate</name>
    </ligand>
</feature>
<feature type="binding site" evidence="1">
    <location>
        <position position="249"/>
    </location>
    <ligand>
        <name>substrate</name>
    </ligand>
</feature>
<feature type="modified residue" description="N-acetylalanine" evidence="4">
    <location>
        <position position="2"/>
    </location>
</feature>
<feature type="sequence conflict" description="In Ref. 2; AA sequence." evidence="5" ref="2">
    <original>D</original>
    <variation>N</variation>
    <location>
        <position position="124"/>
    </location>
</feature>
<feature type="sequence conflict" description="In Ref. 2; AA sequence." evidence="5" ref="2">
    <original>S</original>
    <variation>C</variation>
    <location>
        <position position="184"/>
    </location>
</feature>
<feature type="sequence conflict" description="In Ref. 2; AA sequence." evidence="5" ref="2">
    <original>SVP</original>
    <variation>VPS</variation>
    <location>
        <begin position="198"/>
        <end position="200"/>
    </location>
</feature>
<feature type="sequence conflict" description="In Ref. 2; AA sequence." evidence="5" ref="2">
    <original>NVAGVS</original>
    <variation>WNA</variation>
    <location>
        <begin position="206"/>
        <end position="211"/>
    </location>
</feature>
<feature type="sequence conflict" description="In Ref. 2; AA sequence." evidence="5" ref="2">
    <original>D</original>
    <variation>N</variation>
    <location>
        <position position="222"/>
    </location>
</feature>
<feature type="sequence conflict" description="In Ref. 2; AA sequence." evidence="5" ref="2">
    <original>EN</original>
    <variation>QD</variation>
    <location>
        <begin position="226"/>
        <end position="227"/>
    </location>
</feature>
<feature type="sequence conflict" description="In Ref. 2; AA sequence." evidence="5" ref="2">
    <original>ND</original>
    <variation>DN</variation>
    <location>
        <begin position="286"/>
        <end position="287"/>
    </location>
</feature>
<feature type="sequence conflict" description="In Ref. 2; AA sequence." evidence="5" ref="2">
    <original>DN</original>
    <variation>ND</variation>
    <location>
        <begin position="297"/>
        <end position="298"/>
    </location>
</feature>
<feature type="helix" evidence="8">
    <location>
        <begin position="4"/>
        <end position="8"/>
    </location>
</feature>
<feature type="strand" evidence="8">
    <location>
        <begin position="21"/>
        <end position="27"/>
    </location>
</feature>
<feature type="helix" evidence="8">
    <location>
        <begin position="31"/>
        <end position="41"/>
    </location>
</feature>
<feature type="turn" evidence="8">
    <location>
        <begin position="42"/>
        <end position="44"/>
    </location>
</feature>
<feature type="strand" evidence="8">
    <location>
        <begin position="47"/>
        <end position="52"/>
    </location>
</feature>
<feature type="helix" evidence="8">
    <location>
        <begin position="56"/>
        <end position="68"/>
    </location>
</feature>
<feature type="helix" evidence="8">
    <location>
        <begin position="69"/>
        <end position="72"/>
    </location>
</feature>
<feature type="strand" evidence="8">
    <location>
        <begin position="78"/>
        <end position="83"/>
    </location>
</feature>
<feature type="helix" evidence="8">
    <location>
        <begin position="84"/>
        <end position="87"/>
    </location>
</feature>
<feature type="strand" evidence="8">
    <location>
        <begin position="91"/>
        <end position="95"/>
    </location>
</feature>
<feature type="helix" evidence="8">
    <location>
        <begin position="107"/>
        <end position="128"/>
    </location>
</feature>
<feature type="strand" evidence="8">
    <location>
        <begin position="133"/>
        <end position="136"/>
    </location>
</feature>
<feature type="strand" evidence="6">
    <location>
        <begin position="138"/>
        <end position="140"/>
    </location>
</feature>
<feature type="helix" evidence="8">
    <location>
        <begin position="141"/>
        <end position="152"/>
    </location>
</feature>
<feature type="helix" evidence="8">
    <location>
        <begin position="156"/>
        <end position="158"/>
    </location>
</feature>
<feature type="strand" evidence="8">
    <location>
        <begin position="159"/>
        <end position="161"/>
    </location>
</feature>
<feature type="helix" evidence="8">
    <location>
        <begin position="165"/>
        <end position="179"/>
    </location>
</feature>
<feature type="turn" evidence="8">
    <location>
        <begin position="183"/>
        <end position="185"/>
    </location>
</feature>
<feature type="strand" evidence="7">
    <location>
        <begin position="188"/>
        <end position="190"/>
    </location>
</feature>
<feature type="strand" evidence="8">
    <location>
        <begin position="192"/>
        <end position="195"/>
    </location>
</feature>
<feature type="helix" evidence="8">
    <location>
        <begin position="202"/>
        <end position="204"/>
    </location>
</feature>
<feature type="helix" evidence="8">
    <location>
        <begin position="215"/>
        <end position="218"/>
    </location>
</feature>
<feature type="strand" evidence="8">
    <location>
        <begin position="223"/>
        <end position="228"/>
    </location>
</feature>
<feature type="helix" evidence="8">
    <location>
        <begin position="230"/>
        <end position="246"/>
    </location>
</feature>
<feature type="helix" evidence="8">
    <location>
        <begin position="251"/>
        <end position="265"/>
    </location>
</feature>
<feature type="strand" evidence="8">
    <location>
        <begin position="270"/>
        <end position="277"/>
    </location>
</feature>
<feature type="strand" evidence="8">
    <location>
        <begin position="281"/>
        <end position="283"/>
    </location>
</feature>
<feature type="strand" evidence="8">
    <location>
        <begin position="289"/>
        <end position="297"/>
    </location>
</feature>
<feature type="strand" evidence="8">
    <location>
        <begin position="300"/>
        <end position="304"/>
    </location>
</feature>
<feature type="helix" evidence="8">
    <location>
        <begin position="311"/>
        <end position="327"/>
    </location>
</feature>
<keyword id="KW-0002">3D-structure</keyword>
<keyword id="KW-0007">Acetylation</keyword>
<keyword id="KW-0963">Cytoplasm</keyword>
<keyword id="KW-0903">Direct protein sequencing</keyword>
<keyword id="KW-0520">NAD</keyword>
<keyword id="KW-0560">Oxidoreductase</keyword>
<dbReference type="EC" id="1.1.1.27" evidence="2"/>
<dbReference type="EMBL" id="U38893">
    <property type="protein sequence ID" value="AAA91038.1"/>
    <property type="molecule type" value="mRNA"/>
</dbReference>
<dbReference type="PIR" id="A00350">
    <property type="entry name" value="DEDFLM"/>
</dbReference>
<dbReference type="PDB" id="1LDM">
    <property type="method" value="X-ray"/>
    <property type="resolution" value="2.10 A"/>
    <property type="chains" value="A=2-333"/>
</dbReference>
<dbReference type="PDB" id="3LDH">
    <property type="method" value="X-ray"/>
    <property type="resolution" value="3.00 A"/>
    <property type="chains" value="A=4-333"/>
</dbReference>
<dbReference type="PDB" id="6LDH">
    <property type="method" value="X-ray"/>
    <property type="resolution" value="2.00 A"/>
    <property type="chains" value="A=2-333"/>
</dbReference>
<dbReference type="PDB" id="8LDH">
    <property type="method" value="X-ray"/>
    <property type="resolution" value="2.80 A"/>
    <property type="chains" value="A=2-333"/>
</dbReference>
<dbReference type="PDBsum" id="1LDM"/>
<dbReference type="PDBsum" id="3LDH"/>
<dbReference type="PDBsum" id="6LDH"/>
<dbReference type="PDBsum" id="8LDH"/>
<dbReference type="SMR" id="P00341"/>
<dbReference type="iPTMnet" id="P00341"/>
<dbReference type="SABIO-RK" id="P00341"/>
<dbReference type="UniPathway" id="UPA00554">
    <property type="reaction ID" value="UER00611"/>
</dbReference>
<dbReference type="EvolutionaryTrace" id="P00341"/>
<dbReference type="GO" id="GO:0005737">
    <property type="term" value="C:cytoplasm"/>
    <property type="evidence" value="ECO:0007669"/>
    <property type="project" value="UniProtKB-SubCell"/>
</dbReference>
<dbReference type="GO" id="GO:0004459">
    <property type="term" value="F:L-lactate dehydrogenase activity"/>
    <property type="evidence" value="ECO:0007669"/>
    <property type="project" value="UniProtKB-EC"/>
</dbReference>
<dbReference type="GO" id="GO:0006089">
    <property type="term" value="P:lactate metabolic process"/>
    <property type="evidence" value="ECO:0007669"/>
    <property type="project" value="TreeGrafter"/>
</dbReference>
<dbReference type="CDD" id="cd05293">
    <property type="entry name" value="LDH_1"/>
    <property type="match status" value="1"/>
</dbReference>
<dbReference type="FunFam" id="3.40.50.720:FF:000029">
    <property type="entry name" value="L-lactate dehydrogenase A chain"/>
    <property type="match status" value="1"/>
</dbReference>
<dbReference type="FunFam" id="3.90.110.10:FF:000003">
    <property type="entry name" value="L-lactate dehydrogenase A chain"/>
    <property type="match status" value="1"/>
</dbReference>
<dbReference type="Gene3D" id="3.90.110.10">
    <property type="entry name" value="Lactate dehydrogenase/glycoside hydrolase, family 4, C-terminal"/>
    <property type="match status" value="1"/>
</dbReference>
<dbReference type="Gene3D" id="3.40.50.720">
    <property type="entry name" value="NAD(P)-binding Rossmann-like Domain"/>
    <property type="match status" value="1"/>
</dbReference>
<dbReference type="HAMAP" id="MF_00488">
    <property type="entry name" value="Lactate_dehydrog"/>
    <property type="match status" value="1"/>
</dbReference>
<dbReference type="InterPro" id="IPR001557">
    <property type="entry name" value="L-lactate/malate_DH"/>
</dbReference>
<dbReference type="InterPro" id="IPR011304">
    <property type="entry name" value="L-lactate_DH"/>
</dbReference>
<dbReference type="InterPro" id="IPR018177">
    <property type="entry name" value="L-lactate_DH_AS"/>
</dbReference>
<dbReference type="InterPro" id="IPR022383">
    <property type="entry name" value="Lactate/malate_DH_C"/>
</dbReference>
<dbReference type="InterPro" id="IPR001236">
    <property type="entry name" value="Lactate/malate_DH_N"/>
</dbReference>
<dbReference type="InterPro" id="IPR015955">
    <property type="entry name" value="Lactate_DH/Glyco_Ohase_4_C"/>
</dbReference>
<dbReference type="InterPro" id="IPR036291">
    <property type="entry name" value="NAD(P)-bd_dom_sf"/>
</dbReference>
<dbReference type="NCBIfam" id="TIGR01771">
    <property type="entry name" value="L-LDH-NAD"/>
    <property type="match status" value="1"/>
</dbReference>
<dbReference type="PANTHER" id="PTHR43128">
    <property type="entry name" value="L-2-HYDROXYCARBOXYLATE DEHYDROGENASE (NAD(P)(+))"/>
    <property type="match status" value="1"/>
</dbReference>
<dbReference type="PANTHER" id="PTHR43128:SF10">
    <property type="entry name" value="L-LACTATE DEHYDROGENASE A CHAIN"/>
    <property type="match status" value="1"/>
</dbReference>
<dbReference type="Pfam" id="PF02866">
    <property type="entry name" value="Ldh_1_C"/>
    <property type="match status" value="1"/>
</dbReference>
<dbReference type="Pfam" id="PF00056">
    <property type="entry name" value="Ldh_1_N"/>
    <property type="match status" value="1"/>
</dbReference>
<dbReference type="PIRSF" id="PIRSF000102">
    <property type="entry name" value="Lac_mal_DH"/>
    <property type="match status" value="1"/>
</dbReference>
<dbReference type="PRINTS" id="PR00086">
    <property type="entry name" value="LLDHDRGNASE"/>
</dbReference>
<dbReference type="SUPFAM" id="SSF56327">
    <property type="entry name" value="LDH C-terminal domain-like"/>
    <property type="match status" value="1"/>
</dbReference>
<dbReference type="SUPFAM" id="SSF51735">
    <property type="entry name" value="NAD(P)-binding Rossmann-fold domains"/>
    <property type="match status" value="1"/>
</dbReference>
<dbReference type="PROSITE" id="PS00064">
    <property type="entry name" value="L_LDH"/>
    <property type="match status" value="1"/>
</dbReference>
<gene>
    <name type="primary">ldha</name>
</gene>
<accession>P00341</accession>
<accession>Q92114</accession>
<reference key="1">
    <citation type="journal article" date="1995" name="Mol. Mar. Biol. Biotechnol.">
        <title>The cDNA sequence of the lactate dehydrogenase-A of the spiny dogfish (Squalus acanthias): corrections to the amino acid sequence and an analysis of the phylogeny of vertebrate lactate dehydrogenases.</title>
        <authorList>
            <person name="Stock D.W."/>
            <person name="Powers D.A."/>
        </authorList>
    </citation>
    <scope>NUCLEOTIDE SEQUENCE [MRNA]</scope>
    <source>
        <tissue>Skeletal muscle</tissue>
    </source>
</reference>
<reference key="2">
    <citation type="journal article" date="1977" name="J. Biol. Chem.">
        <title>Amino acid sequence of dogfish muscle lactate dehydrogenase.</title>
        <authorList>
            <person name="Taylor S.S."/>
        </authorList>
    </citation>
    <scope>PROTEIN SEQUENCE OF 2-333</scope>
    <scope>ACETYLATION AT ALA-2</scope>
</reference>
<reference key="3">
    <citation type="journal article" date="1973" name="Biochem. Biophys. Res. Commun.">
        <title>Atomic co-ordinates for dogfish M4 apo-lactate dehydrogenase.</title>
        <authorList>
            <person name="Adams M.J."/>
            <person name="Ford G.C."/>
            <person name="Liljas A."/>
            <person name="Rossmann M.G."/>
        </authorList>
    </citation>
    <scope>X-RAY CRYSTALLOGRAPHY</scope>
</reference>
<reference key="4">
    <citation type="journal article" date="1977" name="Proc. Natl. Acad. Sci. U.S.A.">
        <title>Structural adaptations of lactate dehydrogenase isozymes.</title>
        <authorList>
            <person name="Eventoff W."/>
            <person name="Rossmann M.G."/>
            <person name="Taylor S.S."/>
            <person name="Torff H.-J."/>
            <person name="Meyer H."/>
            <person name="Keil W."/>
            <person name="Kiltz H.-H."/>
        </authorList>
    </citation>
    <scope>X-RAY CRYSTALLOGRAPHY (2.0 ANGSTROMS)</scope>
</reference>
<reference key="5">
    <citation type="journal article" date="1987" name="J. Mol. Biol.">
        <title>Refined crystal structure of dogfish M4 apo-lactate dehydrogenase.</title>
        <authorList>
            <person name="Abad-Zapatero C."/>
            <person name="Griffith J.P."/>
            <person name="Sussman J.L."/>
            <person name="Rossmann M.G."/>
        </authorList>
    </citation>
    <scope>X-RAY CRYSTALLOGRAPHY (2.0 ANGSTROMS) IN COMPLEX WITH NAD AND SUBSTRATE ANALOG</scope>
</reference>
<protein>
    <recommendedName>
        <fullName>L-lactate dehydrogenase A chain</fullName>
        <shortName>LDH-A</shortName>
        <ecNumber evidence="2">1.1.1.27</ecNumber>
    </recommendedName>
    <alternativeName>
        <fullName>LDH-M</fullName>
    </alternativeName>
</protein>
<organism>
    <name type="scientific">Squalus acanthias</name>
    <name type="common">Spiny dogfish</name>
    <dbReference type="NCBI Taxonomy" id="7797"/>
    <lineage>
        <taxon>Eukaryota</taxon>
        <taxon>Metazoa</taxon>
        <taxon>Chordata</taxon>
        <taxon>Craniata</taxon>
        <taxon>Vertebrata</taxon>
        <taxon>Chondrichthyes</taxon>
        <taxon>Elasmobranchii</taxon>
        <taxon>Squalomorphii</taxon>
        <taxon>Squaliformes</taxon>
        <taxon>Squalidae</taxon>
        <taxon>Squalus</taxon>
    </lineage>
</organism>
<proteinExistence type="evidence at protein level"/>
<comment type="function">
    <text evidence="2">Interconverts simultaneously and stereospecifically pyruvate and lactate with concomitant interconversion of NADH and NAD(+).</text>
</comment>
<comment type="catalytic activity">
    <reaction evidence="2">
        <text>(S)-lactate + NAD(+) = pyruvate + NADH + H(+)</text>
        <dbReference type="Rhea" id="RHEA:23444"/>
        <dbReference type="ChEBI" id="CHEBI:15361"/>
        <dbReference type="ChEBI" id="CHEBI:15378"/>
        <dbReference type="ChEBI" id="CHEBI:16651"/>
        <dbReference type="ChEBI" id="CHEBI:57540"/>
        <dbReference type="ChEBI" id="CHEBI:57945"/>
        <dbReference type="EC" id="1.1.1.27"/>
    </reaction>
    <physiologicalReaction direction="left-to-right" evidence="2">
        <dbReference type="Rhea" id="RHEA:23445"/>
    </physiologicalReaction>
    <physiologicalReaction direction="right-to-left" evidence="2">
        <dbReference type="Rhea" id="RHEA:23446"/>
    </physiologicalReaction>
</comment>
<comment type="pathway">
    <text evidence="2">Fermentation; pyruvate fermentation to lactate; (S)-lactate from pyruvate: step 1/1.</text>
</comment>
<comment type="subunit">
    <text evidence="3">Homotetramer.</text>
</comment>
<comment type="subcellular location">
    <subcellularLocation>
        <location>Cytoplasm</location>
    </subcellularLocation>
</comment>
<comment type="similarity">
    <text evidence="5">Belongs to the LDH/MDH superfamily. LDH family.</text>
</comment>
<sequence>MATLKDKLIGHLATSQEPRSYNKITVVGVGAVGMACAISILMKDLADEVALVDVMEDKLKGEMMDLQHGSLFLHTAKIVSGKDYSVSAGSKLVVITAGARQQEGESRLNLVQRNVNIFKFIIPDIVKHSPDCIILVVSNPVDVLTYVAWKLSGLPMHRIIGSGCNLDSARFRYLMGERLGVHSSSCHGWVIGEHGDSSVPVWSGMNVAGVSLKELHPELGTDKDKENWKKLHKDVVDSAYEVIKLKGYTSWAIGLSVADLAETIMKNLCRVHPVSTMVKDFYGIKNDVFLSLPCVLDNHGISNIVKMKLKPDEEQQLQKSATTLWDIQKDLKF</sequence>